<evidence type="ECO:0000255" key="1">
    <source>
        <dbReference type="HAMAP-Rule" id="MF_01638"/>
    </source>
</evidence>
<name>PDXK_ECOL6</name>
<dbReference type="EC" id="2.7.1.35" evidence="1"/>
<dbReference type="EMBL" id="AE014075">
    <property type="protein sequence ID" value="AAN81403.1"/>
    <property type="molecule type" value="Genomic_DNA"/>
</dbReference>
<dbReference type="RefSeq" id="WP_000096640.1">
    <property type="nucleotide sequence ID" value="NZ_CP051263.1"/>
</dbReference>
<dbReference type="SMR" id="Q8FFB5"/>
<dbReference type="STRING" id="199310.c2953"/>
<dbReference type="KEGG" id="ecc:c2953"/>
<dbReference type="eggNOG" id="COG2240">
    <property type="taxonomic scope" value="Bacteria"/>
</dbReference>
<dbReference type="HOGENOM" id="CLU_046496_3_1_6"/>
<dbReference type="BioCyc" id="ECOL199310:C2953-MONOMER"/>
<dbReference type="UniPathway" id="UPA01068">
    <property type="reaction ID" value="UER00298"/>
</dbReference>
<dbReference type="UniPathway" id="UPA01068">
    <property type="reaction ID" value="UER00299"/>
</dbReference>
<dbReference type="UniPathway" id="UPA01068">
    <property type="reaction ID" value="UER00300"/>
</dbReference>
<dbReference type="Proteomes" id="UP000001410">
    <property type="component" value="Chromosome"/>
</dbReference>
<dbReference type="GO" id="GO:0005829">
    <property type="term" value="C:cytosol"/>
    <property type="evidence" value="ECO:0007669"/>
    <property type="project" value="TreeGrafter"/>
</dbReference>
<dbReference type="GO" id="GO:0005524">
    <property type="term" value="F:ATP binding"/>
    <property type="evidence" value="ECO:0007669"/>
    <property type="project" value="UniProtKB-UniRule"/>
</dbReference>
<dbReference type="GO" id="GO:0008902">
    <property type="term" value="F:hydroxymethylpyrimidine kinase activity"/>
    <property type="evidence" value="ECO:0007669"/>
    <property type="project" value="TreeGrafter"/>
</dbReference>
<dbReference type="GO" id="GO:0000287">
    <property type="term" value="F:magnesium ion binding"/>
    <property type="evidence" value="ECO:0007669"/>
    <property type="project" value="UniProtKB-UniRule"/>
</dbReference>
<dbReference type="GO" id="GO:0008478">
    <property type="term" value="F:pyridoxal kinase activity"/>
    <property type="evidence" value="ECO:0007669"/>
    <property type="project" value="UniProtKB-UniRule"/>
</dbReference>
<dbReference type="GO" id="GO:0008270">
    <property type="term" value="F:zinc ion binding"/>
    <property type="evidence" value="ECO:0007669"/>
    <property type="project" value="UniProtKB-UniRule"/>
</dbReference>
<dbReference type="GO" id="GO:0009443">
    <property type="term" value="P:pyridoxal 5'-phosphate salvage"/>
    <property type="evidence" value="ECO:0007669"/>
    <property type="project" value="UniProtKB-UniRule"/>
</dbReference>
<dbReference type="CDD" id="cd01173">
    <property type="entry name" value="pyridoxal_pyridoxamine_kinase"/>
    <property type="match status" value="1"/>
</dbReference>
<dbReference type="FunFam" id="3.40.1190.20:FF:000009">
    <property type="entry name" value="Pyridoxine/pyridoxal/pyridoxamine kinase"/>
    <property type="match status" value="1"/>
</dbReference>
<dbReference type="Gene3D" id="3.40.1190.20">
    <property type="match status" value="1"/>
</dbReference>
<dbReference type="HAMAP" id="MF_01638">
    <property type="entry name" value="PdxK"/>
    <property type="match status" value="1"/>
</dbReference>
<dbReference type="InterPro" id="IPR023479">
    <property type="entry name" value="PdxK"/>
</dbReference>
<dbReference type="InterPro" id="IPR013749">
    <property type="entry name" value="PM/HMP-P_kinase-1"/>
</dbReference>
<dbReference type="InterPro" id="IPR004625">
    <property type="entry name" value="PyrdxlKinase"/>
</dbReference>
<dbReference type="InterPro" id="IPR029056">
    <property type="entry name" value="Ribokinase-like"/>
</dbReference>
<dbReference type="NCBIfam" id="NF006034">
    <property type="entry name" value="PRK08176.1"/>
    <property type="match status" value="1"/>
</dbReference>
<dbReference type="NCBIfam" id="TIGR00687">
    <property type="entry name" value="pyridox_kin"/>
    <property type="match status" value="1"/>
</dbReference>
<dbReference type="PANTHER" id="PTHR10534">
    <property type="entry name" value="PYRIDOXAL KINASE"/>
    <property type="match status" value="1"/>
</dbReference>
<dbReference type="PANTHER" id="PTHR10534:SF15">
    <property type="entry name" value="PYRIDOXINE_PYRIDOXAL_PYRIDOXAMINE KINASE"/>
    <property type="match status" value="1"/>
</dbReference>
<dbReference type="Pfam" id="PF08543">
    <property type="entry name" value="Phos_pyr_kin"/>
    <property type="match status" value="1"/>
</dbReference>
<dbReference type="SUPFAM" id="SSF53613">
    <property type="entry name" value="Ribokinase-like"/>
    <property type="match status" value="1"/>
</dbReference>
<keyword id="KW-0067">ATP-binding</keyword>
<keyword id="KW-0418">Kinase</keyword>
<keyword id="KW-0460">Magnesium</keyword>
<keyword id="KW-0479">Metal-binding</keyword>
<keyword id="KW-0547">Nucleotide-binding</keyword>
<keyword id="KW-1185">Reference proteome</keyword>
<keyword id="KW-0808">Transferase</keyword>
<keyword id="KW-0862">Zinc</keyword>
<feature type="chain" id="PRO_0000268837" description="Pyridoxine/pyridoxal/pyridoxamine kinase">
    <location>
        <begin position="1"/>
        <end position="283"/>
    </location>
</feature>
<feature type="binding site" evidence="1">
    <location>
        <position position="23"/>
    </location>
    <ligand>
        <name>substrate</name>
    </ligand>
</feature>
<feature type="binding site" evidence="1">
    <location>
        <position position="59"/>
    </location>
    <ligand>
        <name>substrate</name>
    </ligand>
</feature>
<feature type="binding site" evidence="1">
    <location>
        <position position="125"/>
    </location>
    <ligand>
        <name>ATP</name>
        <dbReference type="ChEBI" id="CHEBI:30616"/>
    </ligand>
</feature>
<feature type="binding site" evidence="1">
    <location>
        <position position="136"/>
    </location>
    <ligand>
        <name>Mg(2+)</name>
        <dbReference type="ChEBI" id="CHEBI:18420"/>
    </ligand>
</feature>
<feature type="binding site" evidence="1">
    <location>
        <position position="157"/>
    </location>
    <ligand>
        <name>ATP</name>
        <dbReference type="ChEBI" id="CHEBI:30616"/>
    </ligand>
</feature>
<feature type="binding site" evidence="1">
    <location>
        <position position="162"/>
    </location>
    <ligand>
        <name>ATP</name>
        <dbReference type="ChEBI" id="CHEBI:30616"/>
    </ligand>
</feature>
<feature type="binding site" evidence="1">
    <location>
        <position position="162"/>
    </location>
    <ligand>
        <name>Mg(2+)</name>
        <dbReference type="ChEBI" id="CHEBI:18420"/>
    </ligand>
</feature>
<feature type="binding site" evidence="1">
    <location>
        <position position="195"/>
    </location>
    <ligand>
        <name>ATP</name>
        <dbReference type="ChEBI" id="CHEBI:30616"/>
    </ligand>
</feature>
<feature type="binding site" evidence="1">
    <location>
        <begin position="221"/>
        <end position="224"/>
    </location>
    <ligand>
        <name>ATP</name>
        <dbReference type="ChEBI" id="CHEBI:30616"/>
    </ligand>
</feature>
<feature type="binding site" evidence="1">
    <location>
        <position position="231"/>
    </location>
    <ligand>
        <name>ATP</name>
        <dbReference type="ChEBI" id="CHEBI:30616"/>
    </ligand>
</feature>
<feature type="binding site" evidence="1">
    <location>
        <position position="233"/>
    </location>
    <ligand>
        <name>substrate</name>
    </ligand>
</feature>
<comment type="function">
    <text evidence="1">B6-vitamer kinase involved in the salvage pathway of pyridoxal 5'-phosphate (PLP). Catalyzes the phosphorylation of pyridoxine (PN), pyridoxal (PL), and pyridoxamine (PM), forming their respective 5'-phosphorylated esters, i.e. PNP, PLP and PMP.</text>
</comment>
<comment type="catalytic activity">
    <reaction evidence="1">
        <text>pyridoxal + ATP = pyridoxal 5'-phosphate + ADP + H(+)</text>
        <dbReference type="Rhea" id="RHEA:10224"/>
        <dbReference type="ChEBI" id="CHEBI:15378"/>
        <dbReference type="ChEBI" id="CHEBI:17310"/>
        <dbReference type="ChEBI" id="CHEBI:30616"/>
        <dbReference type="ChEBI" id="CHEBI:456216"/>
        <dbReference type="ChEBI" id="CHEBI:597326"/>
        <dbReference type="EC" id="2.7.1.35"/>
    </reaction>
</comment>
<comment type="catalytic activity">
    <reaction evidence="1">
        <text>pyridoxine + ATP = pyridoxine 5'-phosphate + ADP + H(+)</text>
        <dbReference type="Rhea" id="RHEA:25108"/>
        <dbReference type="ChEBI" id="CHEBI:15378"/>
        <dbReference type="ChEBI" id="CHEBI:16709"/>
        <dbReference type="ChEBI" id="CHEBI:30616"/>
        <dbReference type="ChEBI" id="CHEBI:58589"/>
        <dbReference type="ChEBI" id="CHEBI:456216"/>
        <dbReference type="EC" id="2.7.1.35"/>
    </reaction>
</comment>
<comment type="catalytic activity">
    <reaction evidence="1">
        <text>pyridoxamine + ATP = pyridoxamine 5'-phosphate + ADP + H(+)</text>
        <dbReference type="Rhea" id="RHEA:25104"/>
        <dbReference type="ChEBI" id="CHEBI:15378"/>
        <dbReference type="ChEBI" id="CHEBI:30616"/>
        <dbReference type="ChEBI" id="CHEBI:57761"/>
        <dbReference type="ChEBI" id="CHEBI:58451"/>
        <dbReference type="ChEBI" id="CHEBI:456216"/>
        <dbReference type="EC" id="2.7.1.35"/>
    </reaction>
</comment>
<comment type="cofactor">
    <cofactor evidence="1">
        <name>Mg(2+)</name>
        <dbReference type="ChEBI" id="CHEBI:18420"/>
    </cofactor>
</comment>
<comment type="pathway">
    <text evidence="1">Cofactor metabolism; pyridoxal 5'-phosphate salvage; pyridoxal 5'-phosphate from pyridoxal: step 1/1.</text>
</comment>
<comment type="pathway">
    <text evidence="1">Cofactor metabolism; pyridoxal 5'-phosphate salvage; pyridoxine 5'-phosphate from pyridoxine: step 1/1.</text>
</comment>
<comment type="pathway">
    <text evidence="1">Cofactor metabolism; pyridoxal 5'-phosphate salvage; pyridoxamine 5'-phosphate from pyridoxamine: step 1/1.</text>
</comment>
<comment type="subunit">
    <text evidence="1">Homodimer.</text>
</comment>
<comment type="similarity">
    <text evidence="1">Belongs to the pyridoxine kinase family. PdxK subfamily.</text>
</comment>
<gene>
    <name evidence="1" type="primary">pdxK</name>
    <name type="ordered locus">c2953</name>
</gene>
<sequence length="283" mass="30848">MSSLLLFNDKSRALQADIVAVQSQVVYGSVGNSIAVPAIKQNGLNVFAVPTVLLSNTPHYDTFYGGAIPDEWFSGYLRALQERDALRQLRAVTTGYMGTASQIKILAEWLTALRKDHPDLLIMVDPVIGDIDSGIYVKPDLPEAYRQYLLPLAQGITPNIFELEILTGKDCRDLDSAIAAAKSLLSDTLKWVVITSASGNEENQEMQVVVVSADSVNVISHSRVKTDLKGTGDLFCAQLISGLLKGKALTDAVHRAGLRVLEVMRYTQQHESDELILPPLAEA</sequence>
<accession>Q8FFB5</accession>
<proteinExistence type="inferred from homology"/>
<protein>
    <recommendedName>
        <fullName evidence="1">Pyridoxine/pyridoxal/pyridoxamine kinase</fullName>
        <shortName evidence="1">PN/PL/PM kinase</shortName>
        <ecNumber evidence="1">2.7.1.35</ecNumber>
    </recommendedName>
    <alternativeName>
        <fullName evidence="1">B6-vitamer kinase</fullName>
    </alternativeName>
</protein>
<reference key="1">
    <citation type="journal article" date="2002" name="Proc. Natl. Acad. Sci. U.S.A.">
        <title>Extensive mosaic structure revealed by the complete genome sequence of uropathogenic Escherichia coli.</title>
        <authorList>
            <person name="Welch R.A."/>
            <person name="Burland V."/>
            <person name="Plunkett G. III"/>
            <person name="Redford P."/>
            <person name="Roesch P."/>
            <person name="Rasko D."/>
            <person name="Buckles E.L."/>
            <person name="Liou S.-R."/>
            <person name="Boutin A."/>
            <person name="Hackett J."/>
            <person name="Stroud D."/>
            <person name="Mayhew G.F."/>
            <person name="Rose D.J."/>
            <person name="Zhou S."/>
            <person name="Schwartz D.C."/>
            <person name="Perna N.T."/>
            <person name="Mobley H.L.T."/>
            <person name="Donnenberg M.S."/>
            <person name="Blattner F.R."/>
        </authorList>
    </citation>
    <scope>NUCLEOTIDE SEQUENCE [LARGE SCALE GENOMIC DNA]</scope>
    <source>
        <strain>CFT073 / ATCC 700928 / UPEC</strain>
    </source>
</reference>
<organism>
    <name type="scientific">Escherichia coli O6:H1 (strain CFT073 / ATCC 700928 / UPEC)</name>
    <dbReference type="NCBI Taxonomy" id="199310"/>
    <lineage>
        <taxon>Bacteria</taxon>
        <taxon>Pseudomonadati</taxon>
        <taxon>Pseudomonadota</taxon>
        <taxon>Gammaproteobacteria</taxon>
        <taxon>Enterobacterales</taxon>
        <taxon>Enterobacteriaceae</taxon>
        <taxon>Escherichia</taxon>
    </lineage>
</organism>